<name>C82A2_SOYBN</name>
<reference key="1">
    <citation type="journal article" date="1998" name="Mol. Gen. Genet.">
        <title>Identification of elicitor-induced cytochrome P450s of soybean (Glycine max L.) using differential display of mRNA.</title>
        <authorList>
            <person name="Schopfer C.R."/>
            <person name="Ebel J."/>
        </authorList>
    </citation>
    <scope>NUCLEOTIDE SEQUENCE [MRNA]</scope>
    <source>
        <strain>cv. Harosoy 63</strain>
    </source>
</reference>
<organism>
    <name type="scientific">Glycine max</name>
    <name type="common">Soybean</name>
    <name type="synonym">Glycine hispida</name>
    <dbReference type="NCBI Taxonomy" id="3847"/>
    <lineage>
        <taxon>Eukaryota</taxon>
        <taxon>Viridiplantae</taxon>
        <taxon>Streptophyta</taxon>
        <taxon>Embryophyta</taxon>
        <taxon>Tracheophyta</taxon>
        <taxon>Spermatophyta</taxon>
        <taxon>Magnoliopsida</taxon>
        <taxon>eudicotyledons</taxon>
        <taxon>Gunneridae</taxon>
        <taxon>Pentapetalae</taxon>
        <taxon>rosids</taxon>
        <taxon>fabids</taxon>
        <taxon>Fabales</taxon>
        <taxon>Fabaceae</taxon>
        <taxon>Papilionoideae</taxon>
        <taxon>50 kb inversion clade</taxon>
        <taxon>NPAAA clade</taxon>
        <taxon>indigoferoid/millettioid clade</taxon>
        <taxon>Phaseoleae</taxon>
        <taxon>Glycine</taxon>
        <taxon>Glycine subgen. Soja</taxon>
    </lineage>
</organism>
<proteinExistence type="evidence at transcript level"/>
<accession>O81972</accession>
<evidence type="ECO:0000250" key="1"/>
<evidence type="ECO:0000305" key="2"/>
<comment type="cofactor">
    <cofactor evidence="1">
        <name>heme</name>
        <dbReference type="ChEBI" id="CHEBI:30413"/>
    </cofactor>
</comment>
<comment type="subcellular location">
    <subcellularLocation>
        <location evidence="2">Membrane</location>
    </subcellularLocation>
</comment>
<comment type="induction">
    <text>By fungal elicitor.</text>
</comment>
<comment type="similarity">
    <text evidence="2">Belongs to the cytochrome P450 family.</text>
</comment>
<keyword id="KW-0349">Heme</keyword>
<keyword id="KW-0408">Iron</keyword>
<keyword id="KW-0472">Membrane</keyword>
<keyword id="KW-0479">Metal-binding</keyword>
<keyword id="KW-0503">Monooxygenase</keyword>
<keyword id="KW-0560">Oxidoreductase</keyword>
<keyword id="KW-1185">Reference proteome</keyword>
<dbReference type="EC" id="1.14.-.-"/>
<dbReference type="EMBL" id="Y10491">
    <property type="protein sequence ID" value="CAA71515.1"/>
    <property type="molecule type" value="mRNA"/>
</dbReference>
<dbReference type="PIR" id="T07118">
    <property type="entry name" value="T07118"/>
</dbReference>
<dbReference type="RefSeq" id="NP_001240077.1">
    <property type="nucleotide sequence ID" value="NM_001253148.1"/>
</dbReference>
<dbReference type="SMR" id="O81972"/>
<dbReference type="STRING" id="3847.O81972"/>
<dbReference type="PaxDb" id="3847-GLYMA13G36110.2"/>
<dbReference type="EnsemblPlants" id="KRH22207">
    <property type="protein sequence ID" value="KRH22207"/>
    <property type="gene ID" value="GLYMA_13G285300"/>
</dbReference>
<dbReference type="EnsemblPlants" id="KRH22208">
    <property type="protein sequence ID" value="KRH22208"/>
    <property type="gene ID" value="GLYMA_13G285300"/>
</dbReference>
<dbReference type="EnsemblPlants" id="KRH22209">
    <property type="protein sequence ID" value="KRH22209"/>
    <property type="gene ID" value="GLYMA_13G285300"/>
</dbReference>
<dbReference type="GeneID" id="100798546"/>
<dbReference type="Gramene" id="KRH22207">
    <property type="protein sequence ID" value="KRH22207"/>
    <property type="gene ID" value="GLYMA_13G285300"/>
</dbReference>
<dbReference type="Gramene" id="KRH22208">
    <property type="protein sequence ID" value="KRH22208"/>
    <property type="gene ID" value="GLYMA_13G285300"/>
</dbReference>
<dbReference type="Gramene" id="KRH22209">
    <property type="protein sequence ID" value="KRH22209"/>
    <property type="gene ID" value="GLYMA_13G285300"/>
</dbReference>
<dbReference type="KEGG" id="gmx:100798546"/>
<dbReference type="eggNOG" id="KOG0156">
    <property type="taxonomic scope" value="Eukaryota"/>
</dbReference>
<dbReference type="HOGENOM" id="CLU_001570_4_0_1"/>
<dbReference type="InParanoid" id="O81972"/>
<dbReference type="OMA" id="KQWFENL"/>
<dbReference type="OrthoDB" id="2789670at2759"/>
<dbReference type="Proteomes" id="UP000008827">
    <property type="component" value="Chromosome 13"/>
</dbReference>
<dbReference type="GO" id="GO:0016020">
    <property type="term" value="C:membrane"/>
    <property type="evidence" value="ECO:0007669"/>
    <property type="project" value="UniProtKB-SubCell"/>
</dbReference>
<dbReference type="GO" id="GO:0020037">
    <property type="term" value="F:heme binding"/>
    <property type="evidence" value="ECO:0007669"/>
    <property type="project" value="InterPro"/>
</dbReference>
<dbReference type="GO" id="GO:0005506">
    <property type="term" value="F:iron ion binding"/>
    <property type="evidence" value="ECO:0007669"/>
    <property type="project" value="InterPro"/>
</dbReference>
<dbReference type="GO" id="GO:0004497">
    <property type="term" value="F:monooxygenase activity"/>
    <property type="evidence" value="ECO:0000318"/>
    <property type="project" value="GO_Central"/>
</dbReference>
<dbReference type="GO" id="GO:0016705">
    <property type="term" value="F:oxidoreductase activity, acting on paired donors, with incorporation or reduction of molecular oxygen"/>
    <property type="evidence" value="ECO:0007669"/>
    <property type="project" value="InterPro"/>
</dbReference>
<dbReference type="CDD" id="cd20654">
    <property type="entry name" value="CYP82"/>
    <property type="match status" value="1"/>
</dbReference>
<dbReference type="FunFam" id="1.10.630.10:FF:000026">
    <property type="entry name" value="Cytochrome P450 82C4"/>
    <property type="match status" value="1"/>
</dbReference>
<dbReference type="Gene3D" id="1.10.630.10">
    <property type="entry name" value="Cytochrome P450"/>
    <property type="match status" value="1"/>
</dbReference>
<dbReference type="InterPro" id="IPR001128">
    <property type="entry name" value="Cyt_P450"/>
</dbReference>
<dbReference type="InterPro" id="IPR017972">
    <property type="entry name" value="Cyt_P450_CS"/>
</dbReference>
<dbReference type="InterPro" id="IPR002401">
    <property type="entry name" value="Cyt_P450_E_grp-I"/>
</dbReference>
<dbReference type="InterPro" id="IPR036396">
    <property type="entry name" value="Cyt_P450_sf"/>
</dbReference>
<dbReference type="InterPro" id="IPR050651">
    <property type="entry name" value="Plant_Cytochrome_P450_Monoox"/>
</dbReference>
<dbReference type="PANTHER" id="PTHR47947:SF18">
    <property type="entry name" value="CYTOCHROME P450 82A2"/>
    <property type="match status" value="1"/>
</dbReference>
<dbReference type="PANTHER" id="PTHR47947">
    <property type="entry name" value="CYTOCHROME P450 82C3-RELATED"/>
    <property type="match status" value="1"/>
</dbReference>
<dbReference type="Pfam" id="PF00067">
    <property type="entry name" value="p450"/>
    <property type="match status" value="1"/>
</dbReference>
<dbReference type="PRINTS" id="PR00463">
    <property type="entry name" value="EP450I"/>
</dbReference>
<dbReference type="PRINTS" id="PR00385">
    <property type="entry name" value="P450"/>
</dbReference>
<dbReference type="SUPFAM" id="SSF48264">
    <property type="entry name" value="Cytochrome P450"/>
    <property type="match status" value="1"/>
</dbReference>
<dbReference type="PROSITE" id="PS00086">
    <property type="entry name" value="CYTOCHROME_P450"/>
    <property type="match status" value="1"/>
</dbReference>
<protein>
    <recommendedName>
        <fullName>Cytochrome P450 82A2</fullName>
        <ecNumber>1.14.-.-</ecNumber>
    </recommendedName>
    <alternativeName>
        <fullName>Cytochrome P450 CP4</fullName>
    </alternativeName>
</protein>
<gene>
    <name type="primary">CYP82A2</name>
</gene>
<feature type="chain" id="PRO_0000052163" description="Cytochrome P450 82A2">
    <location>
        <begin position="1"/>
        <end position="522"/>
    </location>
</feature>
<feature type="binding site" description="axial binding residue" evidence="1">
    <location>
        <position position="459"/>
    </location>
    <ligand>
        <name>heme</name>
        <dbReference type="ChEBI" id="CHEBI:30413"/>
    </ligand>
    <ligandPart>
        <name>Fe</name>
        <dbReference type="ChEBI" id="CHEBI:18248"/>
    </ligandPart>
</feature>
<sequence>MELVLNSTTIGVGVVSLILLLYLFLRGGSWKSGEEGPPTVAGAWPIIGHLPLLLGSKTPHKTLGDLADKYGPIFSIKIGAKNAVVVSNWEMAKECYTTNDIAVSSLPDLISANLLCYNRSMIVVAPYGPYWRQLRKILMSEFLSPSRVEQLHHVRVSEVQSSITELFRDWRSNKNVQSGFATVELKQWFSLLVFNMILRMVCGKRYFSASTSDDEKANRCVKAVDEFVRLAATFTVGDAIPYLRWFDFGGYENDMRETGKELDEIIGEWLDEHRQKRKMGENVQDLMSVLLSLLEGKTIEGMNVDIVIKSFVLTVIQAGTEASITTLIWATSLILNNPSVLEKLKAELDIQVGKERYICESDLSKLTYLQAVVKETLRLYPPAPLSRPREFEEDCTIGGYTVKKGTRLITNLSKIHTDHNVWSNPLEFKPERFLTTDKDIDMKGQHFQLLPFGGGRRICPGINLGLQTVRLTLASFLHSFEILNPSTEPLDMTEVFRATNTKATPLEILIKPRLSPSCYESI</sequence>